<comment type="function">
    <text evidence="1">Binds mRNA; thus facilitating recognition of the initiation point. It is needed to translate mRNA with a short Shine-Dalgarno (SD) purine-rich sequence (By similarity).</text>
</comment>
<comment type="similarity">
    <text evidence="3">Belongs to the bacterial ribosomal protein bS1 family.</text>
</comment>
<accession>Q92HM4</accession>
<protein>
    <recommendedName>
        <fullName evidence="3">Small ribosomal subunit protein bS1</fullName>
    </recommendedName>
    <alternativeName>
        <fullName>30S ribosomal protein S1</fullName>
    </alternativeName>
</protein>
<proteinExistence type="inferred from homology"/>
<dbReference type="EMBL" id="AE006914">
    <property type="protein sequence ID" value="AAL03285.1"/>
    <property type="molecule type" value="Genomic_DNA"/>
</dbReference>
<dbReference type="PIR" id="C97793">
    <property type="entry name" value="C97793"/>
</dbReference>
<dbReference type="RefSeq" id="WP_010977365.1">
    <property type="nucleotide sequence ID" value="NC_003103.1"/>
</dbReference>
<dbReference type="SMR" id="Q92HM4"/>
<dbReference type="GeneID" id="928535"/>
<dbReference type="KEGG" id="rco:RC0747"/>
<dbReference type="PATRIC" id="fig|272944.4.peg.849"/>
<dbReference type="HOGENOM" id="CLU_015805_2_1_5"/>
<dbReference type="Proteomes" id="UP000000816">
    <property type="component" value="Chromosome"/>
</dbReference>
<dbReference type="GO" id="GO:0022627">
    <property type="term" value="C:cytosolic small ribosomal subunit"/>
    <property type="evidence" value="ECO:0007669"/>
    <property type="project" value="TreeGrafter"/>
</dbReference>
<dbReference type="GO" id="GO:0003729">
    <property type="term" value="F:mRNA binding"/>
    <property type="evidence" value="ECO:0007669"/>
    <property type="project" value="TreeGrafter"/>
</dbReference>
<dbReference type="GO" id="GO:0003735">
    <property type="term" value="F:structural constituent of ribosome"/>
    <property type="evidence" value="ECO:0007669"/>
    <property type="project" value="InterPro"/>
</dbReference>
<dbReference type="GO" id="GO:0006412">
    <property type="term" value="P:translation"/>
    <property type="evidence" value="ECO:0007669"/>
    <property type="project" value="InterPro"/>
</dbReference>
<dbReference type="CDD" id="cd05687">
    <property type="entry name" value="S1_RPS1_repeat_ec1_hs1"/>
    <property type="match status" value="1"/>
</dbReference>
<dbReference type="CDD" id="cd04465">
    <property type="entry name" value="S1_RPS1_repeat_ec2_hs2"/>
    <property type="match status" value="1"/>
</dbReference>
<dbReference type="CDD" id="cd05688">
    <property type="entry name" value="S1_RPS1_repeat_ec3"/>
    <property type="match status" value="1"/>
</dbReference>
<dbReference type="FunFam" id="2.40.50.140:FF:000103">
    <property type="entry name" value="protein RRP5 homolog"/>
    <property type="match status" value="1"/>
</dbReference>
<dbReference type="FunFam" id="2.40.50.140:FF:000051">
    <property type="entry name" value="RNA-binding transcriptional accessory protein"/>
    <property type="match status" value="1"/>
</dbReference>
<dbReference type="Gene3D" id="2.40.50.140">
    <property type="entry name" value="Nucleic acid-binding proteins"/>
    <property type="match status" value="6"/>
</dbReference>
<dbReference type="InterPro" id="IPR012340">
    <property type="entry name" value="NA-bd_OB-fold"/>
</dbReference>
<dbReference type="InterPro" id="IPR050437">
    <property type="entry name" value="Ribos_protein_bS1-like"/>
</dbReference>
<dbReference type="InterPro" id="IPR000110">
    <property type="entry name" value="Ribosomal_bS1"/>
</dbReference>
<dbReference type="InterPro" id="IPR035104">
    <property type="entry name" value="Ribosomal_protein_S1-like"/>
</dbReference>
<dbReference type="InterPro" id="IPR003029">
    <property type="entry name" value="S1_domain"/>
</dbReference>
<dbReference type="NCBIfam" id="NF004952">
    <property type="entry name" value="PRK06299.1-2"/>
    <property type="match status" value="1"/>
</dbReference>
<dbReference type="NCBIfam" id="TIGR00717">
    <property type="entry name" value="rpsA"/>
    <property type="match status" value="1"/>
</dbReference>
<dbReference type="PANTHER" id="PTHR10724">
    <property type="entry name" value="30S RIBOSOMAL PROTEIN S1"/>
    <property type="match status" value="1"/>
</dbReference>
<dbReference type="PANTHER" id="PTHR10724:SF7">
    <property type="entry name" value="SMALL RIBOSOMAL SUBUNIT PROTEIN BS1C"/>
    <property type="match status" value="1"/>
</dbReference>
<dbReference type="Pfam" id="PF00575">
    <property type="entry name" value="S1"/>
    <property type="match status" value="6"/>
</dbReference>
<dbReference type="PIRSF" id="PIRSF002111">
    <property type="entry name" value="RpsA"/>
    <property type="match status" value="1"/>
</dbReference>
<dbReference type="PRINTS" id="PR00681">
    <property type="entry name" value="RIBOSOMALS1"/>
</dbReference>
<dbReference type="SMART" id="SM00316">
    <property type="entry name" value="S1"/>
    <property type="match status" value="6"/>
</dbReference>
<dbReference type="SUPFAM" id="SSF50249">
    <property type="entry name" value="Nucleic acid-binding proteins"/>
    <property type="match status" value="6"/>
</dbReference>
<dbReference type="PROSITE" id="PS50126">
    <property type="entry name" value="S1"/>
    <property type="match status" value="6"/>
</dbReference>
<gene>
    <name type="primary">rpsA</name>
    <name type="ordered locus">RC0747</name>
</gene>
<keyword id="KW-0677">Repeat</keyword>
<keyword id="KW-0687">Ribonucleoprotein</keyword>
<keyword id="KW-0689">Ribosomal protein</keyword>
<keyword id="KW-0694">RNA-binding</keyword>
<sequence>MSIKLKQRFVPQLAAMNHEFAEDFSKMLETVDTSHIKEKTVVKGQVIEIKNDIIIVDVGLKNEGRIPKSEFLALPEVGDVVEVFIEKIEGRNGRTILSREKAVKEELWGQLEIMCSKGEFVDGTIFGRVKGGFTVDLSGVVAFLPGSQVDVRPIKDPTSIMNIKQPFKILSMDKKLGNIVVSRRAILEESRSEARDEMLSKIKEGMVLEGTVKNITDYGAFIDLGSVDGLLHLTDISWGRVNHPSEVLDFNQKVKVMVIKFDEKNKRISLGIKQLDSNPWEAIKEEFPVGKQMTGKVTNFADYGVFIELKDGLEGLVHSSEISWLKSNQNPRKTLTIGQEVEFVVLEVDTEKHRVSLSIKQCQENPLTKFAENNPVGTIIKAPIRNITDFGIFVALGNNMDGMIHEGDISWEDKGTDLLKSYKKGDEIECKVLAINIEKEQVSLGIKQLSPNPYQEISDEYKKGTIVKALITEVKDEGLEVLLNDKVAGFIKRTELSDEKDEQKPEMFQIDKEIEAKVVSIEKSTGRILLSVKAHKIAERQKALKEYGSSDNTTNMGDILANALEDKK</sequence>
<name>RS1_RICCN</name>
<evidence type="ECO:0000250" key="1"/>
<evidence type="ECO:0000255" key="2">
    <source>
        <dbReference type="PROSITE-ProRule" id="PRU00180"/>
    </source>
</evidence>
<evidence type="ECO:0000305" key="3"/>
<organism>
    <name type="scientific">Rickettsia conorii (strain ATCC VR-613 / Malish 7)</name>
    <dbReference type="NCBI Taxonomy" id="272944"/>
    <lineage>
        <taxon>Bacteria</taxon>
        <taxon>Pseudomonadati</taxon>
        <taxon>Pseudomonadota</taxon>
        <taxon>Alphaproteobacteria</taxon>
        <taxon>Rickettsiales</taxon>
        <taxon>Rickettsiaceae</taxon>
        <taxon>Rickettsieae</taxon>
        <taxon>Rickettsia</taxon>
        <taxon>spotted fever group</taxon>
    </lineage>
</organism>
<reference key="1">
    <citation type="journal article" date="2001" name="Science">
        <title>Mechanisms of evolution in Rickettsia conorii and R. prowazekii.</title>
        <authorList>
            <person name="Ogata H."/>
            <person name="Audic S."/>
            <person name="Renesto-Audiffren P."/>
            <person name="Fournier P.-E."/>
            <person name="Barbe V."/>
            <person name="Samson D."/>
            <person name="Roux V."/>
            <person name="Cossart P."/>
            <person name="Weissenbach J."/>
            <person name="Claverie J.-M."/>
            <person name="Raoult D."/>
        </authorList>
    </citation>
    <scope>NUCLEOTIDE SEQUENCE [LARGE SCALE GENOMIC DNA]</scope>
    <source>
        <strain>ATCC VR-613 / Malish 7</strain>
    </source>
</reference>
<feature type="chain" id="PRO_0000286646" description="Small ribosomal subunit protein bS1">
    <location>
        <begin position="1"/>
        <end position="568"/>
    </location>
</feature>
<feature type="domain" description="S1 motif 1" evidence="2">
    <location>
        <begin position="39"/>
        <end position="100"/>
    </location>
</feature>
<feature type="domain" description="S1 motif 2" evidence="2">
    <location>
        <begin position="118"/>
        <end position="184"/>
    </location>
</feature>
<feature type="domain" description="S1 motif 3" evidence="2">
    <location>
        <begin position="205"/>
        <end position="273"/>
    </location>
</feature>
<feature type="domain" description="S1 motif 4" evidence="2">
    <location>
        <begin position="290"/>
        <end position="360"/>
    </location>
</feature>
<feature type="domain" description="S1 motif 5" evidence="2">
    <location>
        <begin position="377"/>
        <end position="447"/>
    </location>
</feature>
<feature type="domain" description="S1 motif 6" evidence="2">
    <location>
        <begin position="464"/>
        <end position="533"/>
    </location>
</feature>